<comment type="function">
    <text evidence="2">The Nipponbare allele of HD6 contains a premature stop codon, resulting in a truncated non-functional product.</text>
</comment>
<comment type="similarity">
    <text evidence="4">Belongs to the protein kinase superfamily. Ser/Thr protein kinase family. CK2 subfamily.</text>
</comment>
<comment type="sequence caution" evidence="4">
    <conflict type="erroneous gene model prediction">
        <sequence resource="EMBL-CDS" id="AAK63938"/>
    </conflict>
</comment>
<comment type="sequence caution" evidence="4">
    <conflict type="erroneous gene model prediction">
        <sequence resource="EMBL-CDS" id="ABF99014"/>
    </conflict>
</comment>
<comment type="sequence caution" evidence="4">
    <conflict type="erroneous initiation">
        <sequence resource="EMBL-CDS" id="BAH92378"/>
    </conflict>
    <text>Extended N-terminus.</text>
</comment>
<comment type="sequence caution" evidence="4">
    <conflict type="erroneous initiation">
        <sequence resource="EMBL-CDS" id="BAS86516"/>
    </conflict>
    <text>Extended N-terminus.</text>
</comment>
<gene>
    <name evidence="3" type="primary">HD6</name>
    <name evidence="4" type="synonym">CKA2</name>
    <name evidence="7" type="ordered locus">Os03g0762000</name>
    <name evidence="6" type="ordered locus">LOC_Os03g55389</name>
    <name evidence="5" type="ORF">OSJNBb0048A17.1</name>
</gene>
<protein>
    <recommendedName>
        <fullName evidence="4">Inactive casein kinase II subunit alpha-2</fullName>
        <shortName evidence="4">OsCKA2</shortName>
    </recommendedName>
    <alternativeName>
        <fullName evidence="3">Protein HEADING DATE 6</fullName>
    </alternativeName>
</protein>
<name>HD6N_ORYSJ</name>
<keyword id="KW-0067">ATP-binding</keyword>
<keyword id="KW-0547">Nucleotide-binding</keyword>
<keyword id="KW-1185">Reference proteome</keyword>
<dbReference type="EMBL" id="AB036785">
    <property type="protein sequence ID" value="BAB21588.1"/>
    <property type="molecule type" value="Genomic_DNA"/>
</dbReference>
<dbReference type="EMBL" id="AB036787">
    <property type="protein sequence ID" value="BAB21590.1"/>
    <property type="molecule type" value="mRNA"/>
</dbReference>
<dbReference type="EMBL" id="AC084282">
    <property type="protein sequence ID" value="AAK63938.1"/>
    <property type="status" value="ALT_SEQ"/>
    <property type="molecule type" value="Genomic_DNA"/>
</dbReference>
<dbReference type="EMBL" id="DP000009">
    <property type="protein sequence ID" value="ABF99014.1"/>
    <property type="status" value="ALT_SEQ"/>
    <property type="molecule type" value="Genomic_DNA"/>
</dbReference>
<dbReference type="EMBL" id="AP008209">
    <property type="protein sequence ID" value="BAH92378.1"/>
    <property type="status" value="ALT_INIT"/>
    <property type="molecule type" value="Genomic_DNA"/>
</dbReference>
<dbReference type="EMBL" id="AP014959">
    <property type="protein sequence ID" value="BAS86516.1"/>
    <property type="status" value="ALT_INIT"/>
    <property type="molecule type" value="Genomic_DNA"/>
</dbReference>
<dbReference type="EMBL" id="AP014959">
    <property type="protein sequence ID" value="BAS86517.1"/>
    <property type="molecule type" value="Genomic_DNA"/>
</dbReference>
<dbReference type="SMR" id="Q9AQU1"/>
<dbReference type="FunCoup" id="Q9AQU1">
    <property type="interactions" value="70"/>
</dbReference>
<dbReference type="STRING" id="39947.Q9AQU1"/>
<dbReference type="PaxDb" id="39947-Q9AQU1"/>
<dbReference type="EnsemblPlants" id="Os03t0762000-02">
    <property type="protein sequence ID" value="Os03t0762000-02"/>
    <property type="gene ID" value="Os03g0762000"/>
</dbReference>
<dbReference type="Gramene" id="Os03t0762000-02">
    <property type="protein sequence ID" value="Os03t0762000-02"/>
    <property type="gene ID" value="Os03g0762000"/>
</dbReference>
<dbReference type="KEGG" id="dosa:Os03g0762000"/>
<dbReference type="eggNOG" id="KOG0668">
    <property type="taxonomic scope" value="Eukaryota"/>
</dbReference>
<dbReference type="HOGENOM" id="CLU_000288_70_2_1"/>
<dbReference type="InParanoid" id="Q9AQU1"/>
<dbReference type="Proteomes" id="UP000000763">
    <property type="component" value="Chromosome 3"/>
</dbReference>
<dbReference type="Proteomes" id="UP000059680">
    <property type="component" value="Chromosome 3"/>
</dbReference>
<dbReference type="GO" id="GO:0005524">
    <property type="term" value="F:ATP binding"/>
    <property type="evidence" value="ECO:0007669"/>
    <property type="project" value="UniProtKB-KW"/>
</dbReference>
<dbReference type="GO" id="GO:0004674">
    <property type="term" value="F:protein serine/threonine kinase activity"/>
    <property type="evidence" value="ECO:0007669"/>
    <property type="project" value="InterPro"/>
</dbReference>
<dbReference type="GO" id="GO:0010229">
    <property type="term" value="P:inflorescence development"/>
    <property type="evidence" value="ECO:0000315"/>
    <property type="project" value="Gramene"/>
</dbReference>
<dbReference type="GO" id="GO:0009648">
    <property type="term" value="P:photoperiodism"/>
    <property type="evidence" value="ECO:0000315"/>
    <property type="project" value="Gramene"/>
</dbReference>
<dbReference type="FunFam" id="3.30.200.20:FF:000088">
    <property type="entry name" value="Casein kinase II subunit alpha"/>
    <property type="match status" value="1"/>
</dbReference>
<dbReference type="Gene3D" id="3.30.200.20">
    <property type="entry name" value="Phosphorylase Kinase, domain 1"/>
    <property type="match status" value="1"/>
</dbReference>
<dbReference type="InterPro" id="IPR045216">
    <property type="entry name" value="CK2_alpha"/>
</dbReference>
<dbReference type="InterPro" id="IPR011009">
    <property type="entry name" value="Kinase-like_dom_sf"/>
</dbReference>
<dbReference type="InterPro" id="IPR000719">
    <property type="entry name" value="Prot_kinase_dom"/>
</dbReference>
<dbReference type="InterPro" id="IPR017441">
    <property type="entry name" value="Protein_kinase_ATP_BS"/>
</dbReference>
<dbReference type="PANTHER" id="PTHR24054">
    <property type="entry name" value="CASEIN KINASE II SUBUNIT ALPHA"/>
    <property type="match status" value="1"/>
</dbReference>
<dbReference type="PANTHER" id="PTHR24054:SF56">
    <property type="entry name" value="CASEIN KINASE II SUBUNIT ALPHA-1"/>
    <property type="match status" value="1"/>
</dbReference>
<dbReference type="Pfam" id="PF00069">
    <property type="entry name" value="Pkinase"/>
    <property type="match status" value="1"/>
</dbReference>
<dbReference type="SUPFAM" id="SSF56112">
    <property type="entry name" value="Protein kinase-like (PK-like)"/>
    <property type="match status" value="1"/>
</dbReference>
<dbReference type="PROSITE" id="PS00107">
    <property type="entry name" value="PROTEIN_KINASE_ATP"/>
    <property type="match status" value="1"/>
</dbReference>
<dbReference type="PROSITE" id="PS50011">
    <property type="entry name" value="PROTEIN_KINASE_DOM"/>
    <property type="match status" value="1"/>
</dbReference>
<feature type="chain" id="PRO_0000437454" description="Inactive casein kinase II subunit alpha-2">
    <location>
        <begin position="1"/>
        <end position="90"/>
    </location>
</feature>
<feature type="binding site" evidence="1">
    <location>
        <begin position="40"/>
        <end position="48"/>
    </location>
    <ligand>
        <name>ATP</name>
        <dbReference type="ChEBI" id="CHEBI:30616"/>
    </ligand>
</feature>
<feature type="binding site" evidence="1">
    <location>
        <position position="63"/>
    </location>
    <ligand>
        <name>ATP</name>
        <dbReference type="ChEBI" id="CHEBI:30616"/>
    </ligand>
</feature>
<accession>Q9AQU1</accession>
<accession>C7J070</accession>
<accession>Q10EU1</accession>
<accession>Q94H91</accession>
<organism>
    <name type="scientific">Oryza sativa subsp. japonica</name>
    <name type="common">Rice</name>
    <dbReference type="NCBI Taxonomy" id="39947"/>
    <lineage>
        <taxon>Eukaryota</taxon>
        <taxon>Viridiplantae</taxon>
        <taxon>Streptophyta</taxon>
        <taxon>Embryophyta</taxon>
        <taxon>Tracheophyta</taxon>
        <taxon>Spermatophyta</taxon>
        <taxon>Magnoliopsida</taxon>
        <taxon>Liliopsida</taxon>
        <taxon>Poales</taxon>
        <taxon>Poaceae</taxon>
        <taxon>BOP clade</taxon>
        <taxon>Oryzoideae</taxon>
        <taxon>Oryzeae</taxon>
        <taxon>Oryzinae</taxon>
        <taxon>Oryza</taxon>
        <taxon>Oryza sativa</taxon>
    </lineage>
</organism>
<reference key="1">
    <citation type="journal article" date="2001" name="Proc. Natl. Acad. Sci. U.S.A.">
        <title>Hd6, a rice quantitative trait locus involved in photoperiod sensitivity, encodes the alpha subunit of protein kinase CK2.</title>
        <authorList>
            <person name="Takahashi Y."/>
            <person name="Shomura A."/>
            <person name="Sasaki T."/>
            <person name="Yano M."/>
        </authorList>
    </citation>
    <scope>NUCLEOTIDE SEQUENCE [GENOMIC DNA / MRNA]</scope>
    <scope>FUNCTION</scope>
    <source>
        <strain>cv. Nipponbare</strain>
    </source>
</reference>
<reference key="2">
    <citation type="journal article" date="2005" name="Genome Res.">
        <title>Sequence, annotation, and analysis of synteny between rice chromosome 3 and diverged grass species.</title>
        <authorList>
            <consortium name="The rice chromosome 3 sequencing consortium"/>
            <person name="Buell C.R."/>
            <person name="Yuan Q."/>
            <person name="Ouyang S."/>
            <person name="Liu J."/>
            <person name="Zhu W."/>
            <person name="Wang A."/>
            <person name="Maiti R."/>
            <person name="Haas B."/>
            <person name="Wortman J."/>
            <person name="Pertea M."/>
            <person name="Jones K.M."/>
            <person name="Kim M."/>
            <person name="Overton L."/>
            <person name="Tsitrin T."/>
            <person name="Fadrosh D."/>
            <person name="Bera J."/>
            <person name="Weaver B."/>
            <person name="Jin S."/>
            <person name="Johri S."/>
            <person name="Reardon M."/>
            <person name="Webb K."/>
            <person name="Hill J."/>
            <person name="Moffat K."/>
            <person name="Tallon L."/>
            <person name="Van Aken S."/>
            <person name="Lewis M."/>
            <person name="Utterback T."/>
            <person name="Feldblyum T."/>
            <person name="Zismann V."/>
            <person name="Iobst S."/>
            <person name="Hsiao J."/>
            <person name="de Vazeille A.R."/>
            <person name="Salzberg S.L."/>
            <person name="White O."/>
            <person name="Fraser C.M."/>
            <person name="Yu Y."/>
            <person name="Kim H."/>
            <person name="Rambo T."/>
            <person name="Currie J."/>
            <person name="Collura K."/>
            <person name="Kernodle-Thompson S."/>
            <person name="Wei F."/>
            <person name="Kudrna K."/>
            <person name="Ammiraju J.S.S."/>
            <person name="Luo M."/>
            <person name="Goicoechea J.L."/>
            <person name="Wing R.A."/>
            <person name="Henry D."/>
            <person name="Oates R."/>
            <person name="Palmer M."/>
            <person name="Pries G."/>
            <person name="Saski C."/>
            <person name="Simmons J."/>
            <person name="Soderlund C."/>
            <person name="Nelson W."/>
            <person name="de la Bastide M."/>
            <person name="Spiegel L."/>
            <person name="Nascimento L."/>
            <person name="Huang E."/>
            <person name="Preston R."/>
            <person name="Zutavern T."/>
            <person name="Palmer L."/>
            <person name="O'Shaughnessy A."/>
            <person name="Dike S."/>
            <person name="McCombie W.R."/>
            <person name="Minx P."/>
            <person name="Cordum H."/>
            <person name="Wilson R."/>
            <person name="Jin W."/>
            <person name="Lee H.R."/>
            <person name="Jiang J."/>
            <person name="Jackson S."/>
        </authorList>
    </citation>
    <scope>NUCLEOTIDE SEQUENCE [LARGE SCALE GENOMIC DNA]</scope>
    <source>
        <strain>cv. Nipponbare</strain>
    </source>
</reference>
<reference key="3">
    <citation type="journal article" date="2005" name="Nature">
        <title>The map-based sequence of the rice genome.</title>
        <authorList>
            <consortium name="International rice genome sequencing project (IRGSP)"/>
        </authorList>
    </citation>
    <scope>NUCLEOTIDE SEQUENCE [LARGE SCALE GENOMIC DNA]</scope>
    <source>
        <strain>cv. Nipponbare</strain>
    </source>
</reference>
<reference key="4">
    <citation type="journal article" date="2008" name="Nucleic Acids Res.">
        <title>The rice annotation project database (RAP-DB): 2008 update.</title>
        <authorList>
            <consortium name="The rice annotation project (RAP)"/>
        </authorList>
    </citation>
    <scope>GENOME REANNOTATION</scope>
    <source>
        <strain>cv. Nipponbare</strain>
    </source>
</reference>
<reference key="5">
    <citation type="journal article" date="2013" name="Rice">
        <title>Improvement of the Oryza sativa Nipponbare reference genome using next generation sequence and optical map data.</title>
        <authorList>
            <person name="Kawahara Y."/>
            <person name="de la Bastide M."/>
            <person name="Hamilton J.P."/>
            <person name="Kanamori H."/>
            <person name="McCombie W.R."/>
            <person name="Ouyang S."/>
            <person name="Schwartz D.C."/>
            <person name="Tanaka T."/>
            <person name="Wu J."/>
            <person name="Zhou S."/>
            <person name="Childs K.L."/>
            <person name="Davidson R.M."/>
            <person name="Lin H."/>
            <person name="Quesada-Ocampo L."/>
            <person name="Vaillancourt B."/>
            <person name="Sakai H."/>
            <person name="Lee S.S."/>
            <person name="Kim J."/>
            <person name="Numa H."/>
            <person name="Itoh T."/>
            <person name="Buell C.R."/>
            <person name="Matsumoto T."/>
        </authorList>
    </citation>
    <scope>GENOME REANNOTATION</scope>
    <source>
        <strain>cv. Nipponbare</strain>
    </source>
</reference>
<proteinExistence type="inferred from homology"/>
<sequence length="90" mass="10498">MSKARVYADVNVLRPKEYWDYEALTVQWGEQDDYEVVRKVGRGKYSEVFEGINVNNNEKCIIKILKPVKKKKIKREIKILQNLCGGPNIV</sequence>
<evidence type="ECO:0000255" key="1">
    <source>
        <dbReference type="PROSITE-ProRule" id="PRU00159"/>
    </source>
</evidence>
<evidence type="ECO:0000269" key="2">
    <source>
    </source>
</evidence>
<evidence type="ECO:0000303" key="3">
    <source>
    </source>
</evidence>
<evidence type="ECO:0000305" key="4"/>
<evidence type="ECO:0000312" key="5">
    <source>
        <dbReference type="EMBL" id="AAK63938.1"/>
    </source>
</evidence>
<evidence type="ECO:0000312" key="6">
    <source>
        <dbReference type="EMBL" id="ABF99014.1"/>
    </source>
</evidence>
<evidence type="ECO:0000312" key="7">
    <source>
        <dbReference type="EMBL" id="BAS86517.1"/>
    </source>
</evidence>